<sequence length="71" mass="8386">MPAVKVKENEPFDVALRRFKRSCEKAGVLAEVRSREFYEKPTSERKRKAAAAVKRHAKKVQREQRRAVRLY</sequence>
<keyword id="KW-0687">Ribonucleoprotein</keyword>
<keyword id="KW-0689">Ribosomal protein</keyword>
<dbReference type="EMBL" id="CP000076">
    <property type="protein sequence ID" value="AAY94854.1"/>
    <property type="molecule type" value="Genomic_DNA"/>
</dbReference>
<dbReference type="RefSeq" id="WP_002551877.1">
    <property type="nucleotide sequence ID" value="NC_004129.6"/>
</dbReference>
<dbReference type="SMR" id="Q4K4W3"/>
<dbReference type="STRING" id="220664.PFL_5661"/>
<dbReference type="DNASU" id="3480036"/>
<dbReference type="GeneID" id="98285513"/>
<dbReference type="KEGG" id="pfl:PFL_5661"/>
<dbReference type="eggNOG" id="COG0828">
    <property type="taxonomic scope" value="Bacteria"/>
</dbReference>
<dbReference type="HOGENOM" id="CLU_159258_1_0_6"/>
<dbReference type="Proteomes" id="UP000008540">
    <property type="component" value="Chromosome"/>
</dbReference>
<dbReference type="GO" id="GO:1990904">
    <property type="term" value="C:ribonucleoprotein complex"/>
    <property type="evidence" value="ECO:0007669"/>
    <property type="project" value="UniProtKB-KW"/>
</dbReference>
<dbReference type="GO" id="GO:0005840">
    <property type="term" value="C:ribosome"/>
    <property type="evidence" value="ECO:0007669"/>
    <property type="project" value="UniProtKB-KW"/>
</dbReference>
<dbReference type="GO" id="GO:0003735">
    <property type="term" value="F:structural constituent of ribosome"/>
    <property type="evidence" value="ECO:0007669"/>
    <property type="project" value="InterPro"/>
</dbReference>
<dbReference type="GO" id="GO:0006412">
    <property type="term" value="P:translation"/>
    <property type="evidence" value="ECO:0007669"/>
    <property type="project" value="UniProtKB-UniRule"/>
</dbReference>
<dbReference type="Gene3D" id="1.20.5.1150">
    <property type="entry name" value="Ribosomal protein S8"/>
    <property type="match status" value="1"/>
</dbReference>
<dbReference type="HAMAP" id="MF_00358">
    <property type="entry name" value="Ribosomal_bS21"/>
    <property type="match status" value="1"/>
</dbReference>
<dbReference type="InterPro" id="IPR001911">
    <property type="entry name" value="Ribosomal_bS21"/>
</dbReference>
<dbReference type="InterPro" id="IPR018278">
    <property type="entry name" value="Ribosomal_bS21_CS"/>
</dbReference>
<dbReference type="InterPro" id="IPR038380">
    <property type="entry name" value="Ribosomal_bS21_sf"/>
</dbReference>
<dbReference type="NCBIfam" id="TIGR00030">
    <property type="entry name" value="S21p"/>
    <property type="match status" value="1"/>
</dbReference>
<dbReference type="PANTHER" id="PTHR21109">
    <property type="entry name" value="MITOCHONDRIAL 28S RIBOSOMAL PROTEIN S21"/>
    <property type="match status" value="1"/>
</dbReference>
<dbReference type="PANTHER" id="PTHR21109:SF22">
    <property type="entry name" value="SMALL RIBOSOMAL SUBUNIT PROTEIN BS21"/>
    <property type="match status" value="1"/>
</dbReference>
<dbReference type="Pfam" id="PF01165">
    <property type="entry name" value="Ribosomal_S21"/>
    <property type="match status" value="1"/>
</dbReference>
<dbReference type="PRINTS" id="PR00976">
    <property type="entry name" value="RIBOSOMALS21"/>
</dbReference>
<dbReference type="PROSITE" id="PS01181">
    <property type="entry name" value="RIBOSOMAL_S21"/>
    <property type="match status" value="1"/>
</dbReference>
<evidence type="ECO:0000255" key="1">
    <source>
        <dbReference type="HAMAP-Rule" id="MF_00358"/>
    </source>
</evidence>
<evidence type="ECO:0000256" key="2">
    <source>
        <dbReference type="SAM" id="MobiDB-lite"/>
    </source>
</evidence>
<evidence type="ECO:0000305" key="3"/>
<protein>
    <recommendedName>
        <fullName evidence="1">Small ribosomal subunit protein bS21</fullName>
    </recommendedName>
    <alternativeName>
        <fullName evidence="3">30S ribosomal protein S21</fullName>
    </alternativeName>
</protein>
<feature type="chain" id="PRO_0000266735" description="Small ribosomal subunit protein bS21">
    <location>
        <begin position="1"/>
        <end position="71"/>
    </location>
</feature>
<feature type="region of interest" description="Disordered" evidence="2">
    <location>
        <begin position="50"/>
        <end position="71"/>
    </location>
</feature>
<feature type="compositionally biased region" description="Basic residues" evidence="2">
    <location>
        <begin position="50"/>
        <end position="59"/>
    </location>
</feature>
<feature type="compositionally biased region" description="Basic and acidic residues" evidence="2">
    <location>
        <begin position="60"/>
        <end position="71"/>
    </location>
</feature>
<comment type="similarity">
    <text evidence="1">Belongs to the bacterial ribosomal protein bS21 family.</text>
</comment>
<reference key="1">
    <citation type="journal article" date="2005" name="Nat. Biotechnol.">
        <title>Complete genome sequence of the plant commensal Pseudomonas fluorescens Pf-5.</title>
        <authorList>
            <person name="Paulsen I.T."/>
            <person name="Press C.M."/>
            <person name="Ravel J."/>
            <person name="Kobayashi D.Y."/>
            <person name="Myers G.S.A."/>
            <person name="Mavrodi D.V."/>
            <person name="DeBoy R.T."/>
            <person name="Seshadri R."/>
            <person name="Ren Q."/>
            <person name="Madupu R."/>
            <person name="Dodson R.J."/>
            <person name="Durkin A.S."/>
            <person name="Brinkac L.M."/>
            <person name="Daugherty S.C."/>
            <person name="Sullivan S.A."/>
            <person name="Rosovitz M.J."/>
            <person name="Gwinn M.L."/>
            <person name="Zhou L."/>
            <person name="Schneider D.J."/>
            <person name="Cartinhour S.W."/>
            <person name="Nelson W.C."/>
            <person name="Weidman J."/>
            <person name="Watkins K."/>
            <person name="Tran K."/>
            <person name="Khouri H."/>
            <person name="Pierson E.A."/>
            <person name="Pierson L.S. III"/>
            <person name="Thomashow L.S."/>
            <person name="Loper J.E."/>
        </authorList>
    </citation>
    <scope>NUCLEOTIDE SEQUENCE [LARGE SCALE GENOMIC DNA]</scope>
    <source>
        <strain>ATCC BAA-477 / NRRL B-23932 / Pf-5</strain>
    </source>
</reference>
<proteinExistence type="inferred from homology"/>
<gene>
    <name evidence="1" type="primary">rpsU</name>
    <name type="ordered locus">PFL_5661</name>
</gene>
<organism>
    <name type="scientific">Pseudomonas fluorescens (strain ATCC BAA-477 / NRRL B-23932 / Pf-5)</name>
    <dbReference type="NCBI Taxonomy" id="220664"/>
    <lineage>
        <taxon>Bacteria</taxon>
        <taxon>Pseudomonadati</taxon>
        <taxon>Pseudomonadota</taxon>
        <taxon>Gammaproteobacteria</taxon>
        <taxon>Pseudomonadales</taxon>
        <taxon>Pseudomonadaceae</taxon>
        <taxon>Pseudomonas</taxon>
    </lineage>
</organism>
<name>RS21_PSEF5</name>
<accession>Q4K4W3</accession>